<gene>
    <name type="primary">Fgfrl1</name>
    <name type="synonym">Fgfr5</name>
</gene>
<proteinExistence type="evidence at protein level"/>
<protein>
    <recommendedName>
        <fullName>Fibroblast growth factor receptor-like 1</fullName>
        <shortName>FGF receptor-like protein 1</shortName>
    </recommendedName>
    <alternativeName>
        <fullName>Fibroblast growth factor receptor 5</fullName>
        <shortName>FGFR-5</shortName>
    </alternativeName>
</protein>
<accession>Q91V87</accession>
<accession>Q920C2</accession>
<accession>Q920C3</accession>
<name>FGRL1_MOUSE</name>
<organism>
    <name type="scientific">Mus musculus</name>
    <name type="common">Mouse</name>
    <dbReference type="NCBI Taxonomy" id="10090"/>
    <lineage>
        <taxon>Eukaryota</taxon>
        <taxon>Metazoa</taxon>
        <taxon>Chordata</taxon>
        <taxon>Craniata</taxon>
        <taxon>Vertebrata</taxon>
        <taxon>Euteleostomi</taxon>
        <taxon>Mammalia</taxon>
        <taxon>Eutheria</taxon>
        <taxon>Euarchontoglires</taxon>
        <taxon>Glires</taxon>
        <taxon>Rodentia</taxon>
        <taxon>Myomorpha</taxon>
        <taxon>Muroidea</taxon>
        <taxon>Muridae</taxon>
        <taxon>Murinae</taxon>
        <taxon>Mus</taxon>
        <taxon>Mus</taxon>
    </lineage>
</organism>
<sequence length="529" mass="57013">MTRSPALLLLLLGALPSAEAARGPPRMADKVVPRQVARLGRTVRLQCPVEGDPPPLTMWTKDGRTIHSGWSRFRVLPQGLKVKEVEAEDAGVYVCKATNGFGSLSVNYTLIIMDDISPGKESPGPGGSSGGQEDPASQQWARPRFTQPSKMRRRVIARPVGSSVRLKCVASGHPRPDIMWMKDDQTLTHLEASEHRKKKWTLSLKNLKPEDSGKYTCRVSNKAGAINATYKVDVIQRTRSKPVLTGTHPVNTTVDFGGTTSFQCKVRSDVKPVIQWLKRVEYGSEGRHNSTIDVGGQKFVVLPTGDVWSRPDGSYLNKLLISRARQDDAGMYICLGANTMGYSFRSAFLTVLPDPKPPGPPMASSSSSTSLPWPVVIGIPAGAVFILGTVLLWLCQTKKKPCAPASTLPVPGHRPPGTSRERSGDKDLPSLAVGICEEHGSAMAPQHILASGSTAGPKLYPKLYTDVHTHTHTHTCTHTLSCGGQGSSTPACPLSVLNTANLQALCPEVGIWGPRQQVGRIENNGGRVS</sequence>
<comment type="function">
    <text evidence="1 7">Has a negative effect on cell proliferation.</text>
</comment>
<comment type="subunit">
    <text evidence="5">Interacts with FGF2 with a low affinity.</text>
</comment>
<comment type="subcellular location">
    <subcellularLocation>
        <location evidence="9">Cell membrane</location>
        <topology evidence="9">Single-pass membrane protein</topology>
    </subcellularLocation>
</comment>
<comment type="alternative products">
    <event type="alternative splicing"/>
    <isoform>
        <id>Q91V87-1</id>
        <name>1</name>
        <name>FGFR5beta</name>
        <name>FGFR5b</name>
        <sequence type="displayed"/>
    </isoform>
    <isoform>
        <id>Q91V87-2</id>
        <name>2</name>
        <name>FGFR5gamma</name>
        <name>FGFR5g</name>
        <sequence type="described" ref="VSP_013976"/>
    </isoform>
</comment>
<comment type="tissue specificity">
    <text evidence="5 7">Highly expressed in the kidney, brain and lung. Weakly expressed in the muscle, thymus, lymph node, stomach, intestine, colon and liver. Expressed in fetal cartilaginous structures like the nasal cartilage, the ribs and the sternum as well as in the cartilaginous rudiments of developing bones such as the vertebrae and the pelvic bone. High expression is found in the muscles of the tongue and the diaphragm.</text>
</comment>
<comment type="developmental stage">
    <text evidence="6">First detected at embryonic day 7 and became clearly visible at day 11 and increased until day 17.</text>
</comment>
<feature type="signal peptide" evidence="1">
    <location>
        <begin position="1"/>
        <end position="20"/>
    </location>
</feature>
<feature type="chain" id="PRO_0000021251" description="Fibroblast growth factor receptor-like 1">
    <location>
        <begin position="21"/>
        <end position="529"/>
    </location>
</feature>
<feature type="topological domain" description="Extracellular" evidence="2">
    <location>
        <begin position="21"/>
        <end position="374"/>
    </location>
</feature>
<feature type="transmembrane region" description="Helical" evidence="2">
    <location>
        <begin position="375"/>
        <end position="395"/>
    </location>
</feature>
<feature type="topological domain" description="Cytoplasmic" evidence="2">
    <location>
        <begin position="396"/>
        <end position="529"/>
    </location>
</feature>
<feature type="domain" description="Ig-like C2-type 1">
    <location>
        <begin position="25"/>
        <end position="111"/>
    </location>
</feature>
<feature type="domain" description="Ig-like C2-type 2">
    <location>
        <begin position="143"/>
        <end position="233"/>
    </location>
</feature>
<feature type="domain" description="Ig-like C2-type 3">
    <location>
        <begin position="242"/>
        <end position="350"/>
    </location>
</feature>
<feature type="region of interest" description="Disordered" evidence="4">
    <location>
        <begin position="116"/>
        <end position="151"/>
    </location>
</feature>
<feature type="region of interest" description="Disordered" evidence="4">
    <location>
        <begin position="405"/>
        <end position="427"/>
    </location>
</feature>
<feature type="glycosylation site" description="N-linked (GlcNAc...) asparagine" evidence="2">
    <location>
        <position position="107"/>
    </location>
</feature>
<feature type="glycosylation site" description="N-linked (GlcNAc...) asparagine" evidence="2">
    <location>
        <position position="227"/>
    </location>
</feature>
<feature type="glycosylation site" description="N-linked (GlcNAc...) asparagine" evidence="2">
    <location>
        <position position="251"/>
    </location>
</feature>
<feature type="glycosylation site" description="N-linked (GlcNAc...) asparagine" evidence="2">
    <location>
        <position position="289"/>
    </location>
</feature>
<feature type="disulfide bond" evidence="3">
    <location>
        <begin position="47"/>
        <end position="95"/>
    </location>
</feature>
<feature type="disulfide bond" evidence="3">
    <location>
        <begin position="168"/>
        <end position="217"/>
    </location>
</feature>
<feature type="disulfide bond" evidence="3">
    <location>
        <begin position="264"/>
        <end position="334"/>
    </location>
</feature>
<feature type="splice variant" id="VSP_013976" description="In isoform 2." evidence="8">
    <location>
        <begin position="23"/>
        <end position="113"/>
    </location>
</feature>
<reference key="1">
    <citation type="journal article" date="2001" name="Gene">
        <title>Identification of a new fibroblast growth factor receptor, FGFR5.</title>
        <authorList>
            <person name="Sleeman M."/>
            <person name="Fraser J."/>
            <person name="McDonald M."/>
            <person name="Yuan S."/>
            <person name="White D."/>
            <person name="Grandison P."/>
            <person name="Kumble K."/>
            <person name="Watson J.D."/>
            <person name="Murison J.G."/>
        </authorList>
    </citation>
    <scope>NUCLEOTIDE SEQUENCE [GENOMIC DNA / MRNA] (ISOFORMS 1 AND 2)</scope>
    <scope>TISSUE SPECIFICITY</scope>
    <scope>INTERACTION WITH FGF2</scope>
    <source>
        <strain>BALB/cJ</strain>
    </source>
</reference>
<reference key="2">
    <citation type="journal article" date="2001" name="Biochim. Biophys. Acta">
        <title>The mouse Fgfrl1 gene coding for a novel FGF receptor-like protein.</title>
        <authorList>
            <person name="Wiedemann M."/>
            <person name="Trueb B."/>
        </authorList>
    </citation>
    <scope>NUCLEOTIDE SEQUENCE [GENOMIC DNA / MRNA] (ISOFORM 1)</scope>
    <scope>DEVELOPMENTAL STAGE</scope>
    <source>
        <tissue>Cartilage</tissue>
    </source>
</reference>
<reference key="3">
    <citation type="journal article" date="2004" name="Genome Res.">
        <title>The status, quality, and expansion of the NIH full-length cDNA project: the Mammalian Gene Collection (MGC).</title>
        <authorList>
            <consortium name="The MGC Project Team"/>
        </authorList>
    </citation>
    <scope>NUCLEOTIDE SEQUENCE [LARGE SCALE MRNA] (ISOFORM 1)</scope>
    <source>
        <strain>FVB/N-3</strain>
        <tissue>Mammary tumor</tissue>
    </source>
</reference>
<reference key="4">
    <citation type="journal article" date="2003" name="J. Biol. Chem.">
        <title>Characterization of FGFRL1, a novel fibroblast growth factor (FGF) receptor preferentially expressed in skeletal tissues.</title>
        <authorList>
            <person name="Trueb B."/>
            <person name="Zhuang L."/>
            <person name="Taeschler S."/>
            <person name="Wiedemann M."/>
        </authorList>
    </citation>
    <scope>FUNCTION</scope>
    <scope>TISSUE SPECIFICITY</scope>
</reference>
<dbReference type="EMBL" id="AF321300">
    <property type="protein sequence ID" value="AAL06295.1"/>
    <property type="molecule type" value="mRNA"/>
</dbReference>
<dbReference type="EMBL" id="AF321301">
    <property type="protein sequence ID" value="AAL06296.1"/>
    <property type="molecule type" value="mRNA"/>
</dbReference>
<dbReference type="EMBL" id="AF321302">
    <property type="protein sequence ID" value="AAL06297.1"/>
    <property type="molecule type" value="Genomic_DNA"/>
</dbReference>
<dbReference type="EMBL" id="AJ293947">
    <property type="protein sequence ID" value="CAC82376.1"/>
    <property type="molecule type" value="mRNA"/>
</dbReference>
<dbReference type="EMBL" id="AJ308490">
    <property type="protein sequence ID" value="CAC83768.1"/>
    <property type="molecule type" value="Genomic_DNA"/>
</dbReference>
<dbReference type="EMBL" id="BC058745">
    <property type="protein sequence ID" value="AAH58745.1"/>
    <property type="molecule type" value="mRNA"/>
</dbReference>
<dbReference type="CCDS" id="CCDS19518.1">
    <molecule id="Q91V87-1"/>
</dbReference>
<dbReference type="CCDS" id="CCDS51592.1">
    <molecule id="Q91V87-2"/>
</dbReference>
<dbReference type="RefSeq" id="NP_001157731.1">
    <molecule id="Q91V87-2"/>
    <property type="nucleotide sequence ID" value="NM_001164259.2"/>
</dbReference>
<dbReference type="RefSeq" id="NP_001412743.1">
    <molecule id="Q91V87-1"/>
    <property type="nucleotide sequence ID" value="NM_001425814.1"/>
</dbReference>
<dbReference type="RefSeq" id="NP_001412744.1">
    <molecule id="Q91V87-1"/>
    <property type="nucleotide sequence ID" value="NM_001425815.1"/>
</dbReference>
<dbReference type="RefSeq" id="NP_473412.1">
    <molecule id="Q91V87-1"/>
    <property type="nucleotide sequence ID" value="NM_054071.3"/>
</dbReference>
<dbReference type="RefSeq" id="XP_017176107.1">
    <property type="nucleotide sequence ID" value="XM_017320618.1"/>
</dbReference>
<dbReference type="RefSeq" id="XP_036020635.1">
    <molecule id="Q91V87-2"/>
    <property type="nucleotide sequence ID" value="XM_036164742.1"/>
</dbReference>
<dbReference type="SMR" id="Q91V87"/>
<dbReference type="BioGRID" id="227959">
    <property type="interactions" value="1"/>
</dbReference>
<dbReference type="FunCoup" id="Q91V87">
    <property type="interactions" value="222"/>
</dbReference>
<dbReference type="STRING" id="10090.ENSMUSP00000013633"/>
<dbReference type="GlyCosmos" id="Q91V87">
    <property type="glycosylation" value="4 sites, No reported glycans"/>
</dbReference>
<dbReference type="GlyGen" id="Q91V87">
    <property type="glycosylation" value="4 sites, 2 N-linked glycans (3 sites)"/>
</dbReference>
<dbReference type="iPTMnet" id="Q91V87"/>
<dbReference type="PhosphoSitePlus" id="Q91V87"/>
<dbReference type="PaxDb" id="10090-ENSMUSP00000013633"/>
<dbReference type="PeptideAtlas" id="Q91V87"/>
<dbReference type="ProteomicsDB" id="271588">
    <molecule id="Q91V87-1"/>
</dbReference>
<dbReference type="ProteomicsDB" id="271589">
    <molecule id="Q91V87-2"/>
</dbReference>
<dbReference type="Pumba" id="Q91V87"/>
<dbReference type="Antibodypedia" id="22198">
    <property type="antibodies" value="347 antibodies from 32 providers"/>
</dbReference>
<dbReference type="DNASU" id="116701"/>
<dbReference type="Ensembl" id="ENSMUST00000013633.12">
    <molecule id="Q91V87-1"/>
    <property type="protein sequence ID" value="ENSMUSP00000013633.9"/>
    <property type="gene ID" value="ENSMUSG00000008090.15"/>
</dbReference>
<dbReference type="Ensembl" id="ENSMUST00000112560.8">
    <molecule id="Q91V87-2"/>
    <property type="protein sequence ID" value="ENSMUSP00000108179.4"/>
    <property type="gene ID" value="ENSMUSG00000008090.15"/>
</dbReference>
<dbReference type="GeneID" id="116701"/>
<dbReference type="KEGG" id="mmu:116701"/>
<dbReference type="UCSC" id="uc008ypa.2">
    <molecule id="Q91V87-1"/>
    <property type="organism name" value="mouse"/>
</dbReference>
<dbReference type="UCSC" id="uc012eav.1">
    <molecule id="Q91V87-2"/>
    <property type="organism name" value="mouse"/>
</dbReference>
<dbReference type="AGR" id="MGI:2150920"/>
<dbReference type="CTD" id="53834"/>
<dbReference type="MGI" id="MGI:2150920">
    <property type="gene designation" value="Fgfrl1"/>
</dbReference>
<dbReference type="VEuPathDB" id="HostDB:ENSMUSG00000008090"/>
<dbReference type="eggNOG" id="KOG0200">
    <property type="taxonomic scope" value="Eukaryota"/>
</dbReference>
<dbReference type="GeneTree" id="ENSGT00940000156736"/>
<dbReference type="HOGENOM" id="CLU_038830_1_0_1"/>
<dbReference type="InParanoid" id="Q91V87"/>
<dbReference type="OMA" id="LIHANNM"/>
<dbReference type="OrthoDB" id="6244905at2759"/>
<dbReference type="PhylomeDB" id="Q91V87"/>
<dbReference type="Reactome" id="R-MMU-5658623">
    <property type="pathway name" value="FGFRL1 modulation of FGFR1 signaling"/>
</dbReference>
<dbReference type="BioGRID-ORCS" id="116701">
    <property type="hits" value="1 hit in 78 CRISPR screens"/>
</dbReference>
<dbReference type="ChiTaRS" id="Fgfrl1">
    <property type="organism name" value="mouse"/>
</dbReference>
<dbReference type="PRO" id="PR:Q91V87"/>
<dbReference type="Proteomes" id="UP000000589">
    <property type="component" value="Chromosome 5"/>
</dbReference>
<dbReference type="RNAct" id="Q91V87">
    <property type="molecule type" value="protein"/>
</dbReference>
<dbReference type="Bgee" id="ENSMUSG00000008090">
    <property type="expression patterns" value="Expressed in humerus cartilage element and 301 other cell types or tissues"/>
</dbReference>
<dbReference type="ExpressionAtlas" id="Q91V87">
    <property type="expression patterns" value="baseline and differential"/>
</dbReference>
<dbReference type="GO" id="GO:0044291">
    <property type="term" value="C:cell-cell contact zone"/>
    <property type="evidence" value="ECO:0007669"/>
    <property type="project" value="Ensembl"/>
</dbReference>
<dbReference type="GO" id="GO:0005794">
    <property type="term" value="C:Golgi apparatus"/>
    <property type="evidence" value="ECO:0007669"/>
    <property type="project" value="Ensembl"/>
</dbReference>
<dbReference type="GO" id="GO:0005886">
    <property type="term" value="C:plasma membrane"/>
    <property type="evidence" value="ECO:0000314"/>
    <property type="project" value="MGI"/>
</dbReference>
<dbReference type="GO" id="GO:0030133">
    <property type="term" value="C:transport vesicle"/>
    <property type="evidence" value="ECO:0007669"/>
    <property type="project" value="Ensembl"/>
</dbReference>
<dbReference type="GO" id="GO:0017134">
    <property type="term" value="F:fibroblast growth factor binding"/>
    <property type="evidence" value="ECO:0000353"/>
    <property type="project" value="MGI"/>
</dbReference>
<dbReference type="GO" id="GO:0005007">
    <property type="term" value="F:fibroblast growth factor receptor activity"/>
    <property type="evidence" value="ECO:0000314"/>
    <property type="project" value="UniProtKB"/>
</dbReference>
<dbReference type="GO" id="GO:0008201">
    <property type="term" value="F:heparin binding"/>
    <property type="evidence" value="ECO:0007669"/>
    <property type="project" value="Ensembl"/>
</dbReference>
<dbReference type="GO" id="GO:0042802">
    <property type="term" value="F:identical protein binding"/>
    <property type="evidence" value="ECO:0007669"/>
    <property type="project" value="Ensembl"/>
</dbReference>
<dbReference type="GO" id="GO:0001571">
    <property type="term" value="F:non-tyrosine kinase fibroblast growth factor receptor activity"/>
    <property type="evidence" value="ECO:0000247"/>
    <property type="project" value="MGI"/>
</dbReference>
<dbReference type="GO" id="GO:0007166">
    <property type="term" value="P:cell surface receptor signaling pathway"/>
    <property type="evidence" value="ECO:0000247"/>
    <property type="project" value="MGI"/>
</dbReference>
<dbReference type="GO" id="GO:0098742">
    <property type="term" value="P:cell-cell adhesion via plasma-membrane adhesion molecules"/>
    <property type="evidence" value="ECO:0007669"/>
    <property type="project" value="Ensembl"/>
</dbReference>
<dbReference type="GO" id="GO:0060539">
    <property type="term" value="P:diaphragm development"/>
    <property type="evidence" value="ECO:0000315"/>
    <property type="project" value="MGI"/>
</dbReference>
<dbReference type="GO" id="GO:0003179">
    <property type="term" value="P:heart valve morphogenesis"/>
    <property type="evidence" value="ECO:0000315"/>
    <property type="project" value="MGI"/>
</dbReference>
<dbReference type="GO" id="GO:0008285">
    <property type="term" value="P:negative regulation of cell population proliferation"/>
    <property type="evidence" value="ECO:0000314"/>
    <property type="project" value="MGI"/>
</dbReference>
<dbReference type="GO" id="GO:0040037">
    <property type="term" value="P:negative regulation of fibroblast growth factor receptor signaling pathway"/>
    <property type="evidence" value="ECO:0000305"/>
    <property type="project" value="MGI"/>
</dbReference>
<dbReference type="GO" id="GO:0001501">
    <property type="term" value="P:skeletal system development"/>
    <property type="evidence" value="ECO:0000315"/>
    <property type="project" value="MGI"/>
</dbReference>
<dbReference type="GO" id="GO:0060412">
    <property type="term" value="P:ventricular septum morphogenesis"/>
    <property type="evidence" value="ECO:0000315"/>
    <property type="project" value="MGI"/>
</dbReference>
<dbReference type="CDD" id="cd05856">
    <property type="entry name" value="IgI_2_FGFRL1-like"/>
    <property type="match status" value="1"/>
</dbReference>
<dbReference type="FunFam" id="2.60.40.10:FF:000016">
    <property type="entry name" value="Fibroblast growth factor receptor"/>
    <property type="match status" value="1"/>
</dbReference>
<dbReference type="FunFam" id="2.60.40.10:FF:000246">
    <property type="entry name" value="Fibroblast growth factor receptor like 1"/>
    <property type="match status" value="1"/>
</dbReference>
<dbReference type="FunFam" id="2.60.40.10:FF:000593">
    <property type="entry name" value="Fibroblast growth factor receptor-like 1"/>
    <property type="match status" value="1"/>
</dbReference>
<dbReference type="Gene3D" id="2.60.40.10">
    <property type="entry name" value="Immunoglobulins"/>
    <property type="match status" value="3"/>
</dbReference>
<dbReference type="InterPro" id="IPR052615">
    <property type="entry name" value="FGFRL"/>
</dbReference>
<dbReference type="InterPro" id="IPR007110">
    <property type="entry name" value="Ig-like_dom"/>
</dbReference>
<dbReference type="InterPro" id="IPR036179">
    <property type="entry name" value="Ig-like_dom_sf"/>
</dbReference>
<dbReference type="InterPro" id="IPR013783">
    <property type="entry name" value="Ig-like_fold"/>
</dbReference>
<dbReference type="InterPro" id="IPR013098">
    <property type="entry name" value="Ig_I-set"/>
</dbReference>
<dbReference type="InterPro" id="IPR003599">
    <property type="entry name" value="Ig_sub"/>
</dbReference>
<dbReference type="InterPro" id="IPR003598">
    <property type="entry name" value="Ig_sub2"/>
</dbReference>
<dbReference type="PANTHER" id="PTHR19890">
    <property type="entry name" value="FIBROBLAST GROWTH FACTOR RECEPTOR"/>
    <property type="match status" value="1"/>
</dbReference>
<dbReference type="PANTHER" id="PTHR19890:SF10">
    <property type="entry name" value="FIBROBLAST GROWTH FACTOR RECEPTOR-LIKE 1"/>
    <property type="match status" value="1"/>
</dbReference>
<dbReference type="Pfam" id="PF07679">
    <property type="entry name" value="I-set"/>
    <property type="match status" value="2"/>
</dbReference>
<dbReference type="Pfam" id="PF13927">
    <property type="entry name" value="Ig_3"/>
    <property type="match status" value="1"/>
</dbReference>
<dbReference type="SMART" id="SM00409">
    <property type="entry name" value="IG"/>
    <property type="match status" value="3"/>
</dbReference>
<dbReference type="SMART" id="SM00408">
    <property type="entry name" value="IGc2"/>
    <property type="match status" value="3"/>
</dbReference>
<dbReference type="SUPFAM" id="SSF48726">
    <property type="entry name" value="Immunoglobulin"/>
    <property type="match status" value="3"/>
</dbReference>
<dbReference type="PROSITE" id="PS50835">
    <property type="entry name" value="IG_LIKE"/>
    <property type="match status" value="3"/>
</dbReference>
<evidence type="ECO:0000250" key="1"/>
<evidence type="ECO:0000255" key="2"/>
<evidence type="ECO:0000255" key="3">
    <source>
        <dbReference type="PROSITE-ProRule" id="PRU00114"/>
    </source>
</evidence>
<evidence type="ECO:0000256" key="4">
    <source>
        <dbReference type="SAM" id="MobiDB-lite"/>
    </source>
</evidence>
<evidence type="ECO:0000269" key="5">
    <source>
    </source>
</evidence>
<evidence type="ECO:0000269" key="6">
    <source>
    </source>
</evidence>
<evidence type="ECO:0000269" key="7">
    <source>
    </source>
</evidence>
<evidence type="ECO:0000303" key="8">
    <source>
    </source>
</evidence>
<evidence type="ECO:0000305" key="9"/>
<keyword id="KW-0025">Alternative splicing</keyword>
<keyword id="KW-1003">Cell membrane</keyword>
<keyword id="KW-1015">Disulfide bond</keyword>
<keyword id="KW-0325">Glycoprotein</keyword>
<keyword id="KW-0393">Immunoglobulin domain</keyword>
<keyword id="KW-0472">Membrane</keyword>
<keyword id="KW-0675">Receptor</keyword>
<keyword id="KW-1185">Reference proteome</keyword>
<keyword id="KW-0677">Repeat</keyword>
<keyword id="KW-0732">Signal</keyword>
<keyword id="KW-0812">Transmembrane</keyword>
<keyword id="KW-1133">Transmembrane helix</keyword>